<evidence type="ECO:0000250" key="1"/>
<evidence type="ECO:0000255" key="2"/>
<evidence type="ECO:0000256" key="3">
    <source>
        <dbReference type="SAM" id="MobiDB-lite"/>
    </source>
</evidence>
<evidence type="ECO:0000305" key="4"/>
<feature type="chain" id="PRO_0000333508" description="GDP-mannose transporter">
    <location>
        <begin position="1"/>
        <end position="381"/>
    </location>
</feature>
<feature type="topological domain" description="Cytoplasmic" evidence="1">
    <location>
        <begin position="1"/>
        <end position="40"/>
    </location>
</feature>
<feature type="transmembrane region" description="Helical" evidence="2">
    <location>
        <begin position="41"/>
        <end position="61"/>
    </location>
</feature>
<feature type="topological domain" description="Lumenal" evidence="1">
    <location>
        <begin position="62"/>
        <end position="71"/>
    </location>
</feature>
<feature type="transmembrane region" description="Helical" evidence="2">
    <location>
        <begin position="72"/>
        <end position="92"/>
    </location>
</feature>
<feature type="topological domain" description="Cytoplasmic" evidence="1">
    <location>
        <begin position="93"/>
        <end position="110"/>
    </location>
</feature>
<feature type="transmembrane region" description="Helical" evidence="2">
    <location>
        <begin position="111"/>
        <end position="127"/>
    </location>
</feature>
<feature type="topological domain" description="Lumenal" evidence="1">
    <location>
        <begin position="128"/>
        <end position="134"/>
    </location>
</feature>
<feature type="transmembrane region" description="Helical" evidence="2">
    <location>
        <begin position="135"/>
        <end position="151"/>
    </location>
</feature>
<feature type="topological domain" description="Cytoplasmic" evidence="1">
    <location>
        <begin position="152"/>
        <end position="160"/>
    </location>
</feature>
<feature type="transmembrane region" description="Helical" evidence="2">
    <location>
        <begin position="161"/>
        <end position="182"/>
    </location>
</feature>
<feature type="topological domain" description="Lumenal" evidence="1">
    <location>
        <begin position="183"/>
        <end position="200"/>
    </location>
</feature>
<feature type="transmembrane region" description="Helical" evidence="2">
    <location>
        <begin position="201"/>
        <end position="221"/>
    </location>
</feature>
<feature type="topological domain" description="Cytoplasmic" evidence="1">
    <location>
        <begin position="222"/>
        <end position="233"/>
    </location>
</feature>
<feature type="transmembrane region" description="Helical" evidence="2">
    <location>
        <begin position="234"/>
        <end position="254"/>
    </location>
</feature>
<feature type="topological domain" description="Lumenal" evidence="1">
    <location>
        <begin position="255"/>
        <end position="274"/>
    </location>
</feature>
<feature type="transmembrane region" description="Helical" evidence="2">
    <location>
        <begin position="275"/>
        <end position="295"/>
    </location>
</feature>
<feature type="topological domain" description="Cytoplasmic" evidence="1">
    <location>
        <begin position="296"/>
        <end position="303"/>
    </location>
</feature>
<feature type="transmembrane region" description="Helical" evidence="2">
    <location>
        <begin position="304"/>
        <end position="324"/>
    </location>
</feature>
<feature type="topological domain" description="Lumenal" evidence="1">
    <location>
        <begin position="325"/>
        <end position="327"/>
    </location>
</feature>
<feature type="transmembrane region" description="Helical" evidence="2">
    <location>
        <begin position="328"/>
        <end position="348"/>
    </location>
</feature>
<feature type="topological domain" description="Cytoplasmic" evidence="1">
    <location>
        <begin position="349"/>
        <end position="381"/>
    </location>
</feature>
<feature type="region of interest" description="Disordered" evidence="3">
    <location>
        <begin position="362"/>
        <end position="381"/>
    </location>
</feature>
<feature type="glycosylation site" description="N-linked (GlcNAc...) asparagine" evidence="2">
    <location>
        <position position="262"/>
    </location>
</feature>
<gene>
    <name type="primary">gmt1</name>
    <name type="synonym">vrg4</name>
    <name type="ORF">ACLA_009020</name>
</gene>
<name>GMT_ASPCL</name>
<organism>
    <name type="scientific">Aspergillus clavatus (strain ATCC 1007 / CBS 513.65 / DSM 816 / NCTC 3887 / NRRL 1 / QM 1276 / 107)</name>
    <dbReference type="NCBI Taxonomy" id="344612"/>
    <lineage>
        <taxon>Eukaryota</taxon>
        <taxon>Fungi</taxon>
        <taxon>Dikarya</taxon>
        <taxon>Ascomycota</taxon>
        <taxon>Pezizomycotina</taxon>
        <taxon>Eurotiomycetes</taxon>
        <taxon>Eurotiomycetidae</taxon>
        <taxon>Eurotiales</taxon>
        <taxon>Aspergillaceae</taxon>
        <taxon>Aspergillus</taxon>
        <taxon>Aspergillus subgen. Fumigati</taxon>
    </lineage>
</organism>
<protein>
    <recommendedName>
        <fullName>GDP-mannose transporter</fullName>
        <shortName>GMT</shortName>
    </recommendedName>
</protein>
<accession>A1C9R4</accession>
<keyword id="KW-0968">Cytoplasmic vesicle</keyword>
<keyword id="KW-0256">Endoplasmic reticulum</keyword>
<keyword id="KW-0325">Glycoprotein</keyword>
<keyword id="KW-0333">Golgi apparatus</keyword>
<keyword id="KW-0472">Membrane</keyword>
<keyword id="KW-1185">Reference proteome</keyword>
<keyword id="KW-0762">Sugar transport</keyword>
<keyword id="KW-0812">Transmembrane</keyword>
<keyword id="KW-1133">Transmembrane helix</keyword>
<keyword id="KW-0813">Transport</keyword>
<proteinExistence type="inferred from homology"/>
<reference key="1">
    <citation type="journal article" date="2008" name="PLoS Genet.">
        <title>Genomic islands in the pathogenic filamentous fungus Aspergillus fumigatus.</title>
        <authorList>
            <person name="Fedorova N.D."/>
            <person name="Khaldi N."/>
            <person name="Joardar V.S."/>
            <person name="Maiti R."/>
            <person name="Amedeo P."/>
            <person name="Anderson M.J."/>
            <person name="Crabtree J."/>
            <person name="Silva J.C."/>
            <person name="Badger J.H."/>
            <person name="Albarraq A."/>
            <person name="Angiuoli S."/>
            <person name="Bussey H."/>
            <person name="Bowyer P."/>
            <person name="Cotty P.J."/>
            <person name="Dyer P.S."/>
            <person name="Egan A."/>
            <person name="Galens K."/>
            <person name="Fraser-Liggett C.M."/>
            <person name="Haas B.J."/>
            <person name="Inman J.M."/>
            <person name="Kent R."/>
            <person name="Lemieux S."/>
            <person name="Malavazi I."/>
            <person name="Orvis J."/>
            <person name="Roemer T."/>
            <person name="Ronning C.M."/>
            <person name="Sundaram J.P."/>
            <person name="Sutton G."/>
            <person name="Turner G."/>
            <person name="Venter J.C."/>
            <person name="White O.R."/>
            <person name="Whitty B.R."/>
            <person name="Youngman P."/>
            <person name="Wolfe K.H."/>
            <person name="Goldman G.H."/>
            <person name="Wortman J.R."/>
            <person name="Jiang B."/>
            <person name="Denning D.W."/>
            <person name="Nierman W.C."/>
        </authorList>
    </citation>
    <scope>NUCLEOTIDE SEQUENCE [LARGE SCALE GENOMIC DNA]</scope>
    <source>
        <strain>ATCC 1007 / CBS 513.65 / DSM 816 / NCTC 3887 / NRRL 1 / QM 1276 / 107</strain>
    </source>
</reference>
<dbReference type="EMBL" id="DS027049">
    <property type="protein sequence ID" value="EAW12482.1"/>
    <property type="molecule type" value="Genomic_DNA"/>
</dbReference>
<dbReference type="RefSeq" id="XP_001273908.1">
    <property type="nucleotide sequence ID" value="XM_001273907.1"/>
</dbReference>
<dbReference type="SMR" id="A1C9R4"/>
<dbReference type="STRING" id="344612.A1C9R4"/>
<dbReference type="GlyCosmos" id="A1C9R4">
    <property type="glycosylation" value="1 site, No reported glycans"/>
</dbReference>
<dbReference type="EnsemblFungi" id="EAW12482">
    <property type="protein sequence ID" value="EAW12482"/>
    <property type="gene ID" value="ACLA_009020"/>
</dbReference>
<dbReference type="GeneID" id="4706353"/>
<dbReference type="KEGG" id="act:ACLA_009020"/>
<dbReference type="VEuPathDB" id="FungiDB:ACLA_009020"/>
<dbReference type="eggNOG" id="KOG1444">
    <property type="taxonomic scope" value="Eukaryota"/>
</dbReference>
<dbReference type="HOGENOM" id="CLU_025360_1_2_1"/>
<dbReference type="OMA" id="VWMLINC"/>
<dbReference type="OrthoDB" id="417037at2759"/>
<dbReference type="Proteomes" id="UP000006701">
    <property type="component" value="Unassembled WGS sequence"/>
</dbReference>
<dbReference type="GO" id="GO:0030659">
    <property type="term" value="C:cytoplasmic vesicle membrane"/>
    <property type="evidence" value="ECO:0007669"/>
    <property type="project" value="UniProtKB-SubCell"/>
</dbReference>
<dbReference type="GO" id="GO:0005789">
    <property type="term" value="C:endoplasmic reticulum membrane"/>
    <property type="evidence" value="ECO:0007669"/>
    <property type="project" value="UniProtKB-SubCell"/>
</dbReference>
<dbReference type="GO" id="GO:0000139">
    <property type="term" value="C:Golgi membrane"/>
    <property type="evidence" value="ECO:0007669"/>
    <property type="project" value="UniProtKB-SubCell"/>
</dbReference>
<dbReference type="GO" id="GO:0005458">
    <property type="term" value="F:GDP-mannose transmembrane transporter activity"/>
    <property type="evidence" value="ECO:0007669"/>
    <property type="project" value="EnsemblFungi"/>
</dbReference>
<dbReference type="InterPro" id="IPR013657">
    <property type="entry name" value="SCL35B1-4/HUT1"/>
</dbReference>
<dbReference type="InterPro" id="IPR050186">
    <property type="entry name" value="TPT_transporter"/>
</dbReference>
<dbReference type="NCBIfam" id="TIGR00803">
    <property type="entry name" value="nst"/>
    <property type="match status" value="1"/>
</dbReference>
<dbReference type="PANTHER" id="PTHR11132">
    <property type="entry name" value="SOLUTE CARRIER FAMILY 35"/>
    <property type="match status" value="1"/>
</dbReference>
<dbReference type="Pfam" id="PF08449">
    <property type="entry name" value="UAA"/>
    <property type="match status" value="1"/>
</dbReference>
<dbReference type="SUPFAM" id="SSF103481">
    <property type="entry name" value="Multidrug resistance efflux transporter EmrE"/>
    <property type="match status" value="1"/>
</dbReference>
<sequence length="381" mass="41621">MADDKKTNDYTVEMDKLDQGSKNFEAPLPPVQPRSAPNAQLANNPILPVLAYCGSSIMMTVMNKYVLSGTDFNLNFLLLCVQSIVCIVAIQTCKASKLITYRDFNADEAKKWFPITLLLIGMIYTGSKALQFLSIPVYTIFKNLTIILIAYGEVLWFGGSVTGLTLFSFGLMVLSSIIAAWADIKHAVESSGDATAKVSTLNAGYIWMLINCLCTSSYVLGMRKRIKLTNFKDFDTMFYNNLLSIPVLLVLTFLMEDWSSANITRNFPPADRNGIMFAMILSGLSSVFISYTSAWCVRVTSSTTYSMVGALNKLPIAVSGLIFFDAPVTFPSVSAIVVGFVSGIVYAVAKIKQNAKPKTGVLPTSNPVSASSQSMRDSLRS</sequence>
<comment type="function">
    <text evidence="1">Involved in the import of GDP-mannose from the cytoplasm into the Golgi lumen.</text>
</comment>
<comment type="subunit">
    <text evidence="1">Homooligomer.</text>
</comment>
<comment type="subcellular location">
    <subcellularLocation>
        <location evidence="1">Golgi apparatus membrane</location>
        <topology evidence="1">Multi-pass membrane protein</topology>
    </subcellularLocation>
    <subcellularLocation>
        <location evidence="1">Cytoplasmic vesicle membrane</location>
        <topology evidence="1">Multi-pass membrane protein</topology>
    </subcellularLocation>
    <subcellularLocation>
        <location evidence="1">Endoplasmic reticulum membrane</location>
        <topology evidence="1">Multi-pass membrane protein</topology>
    </subcellularLocation>
</comment>
<comment type="similarity">
    <text evidence="4">Belongs to the TPT transporter family. SLC35D subfamily.</text>
</comment>